<keyword id="KW-0040">ANK repeat</keyword>
<keyword id="KW-0143">Chaperone</keyword>
<keyword id="KW-0256">Endoplasmic reticulum</keyword>
<keyword id="KW-0472">Membrane</keyword>
<keyword id="KW-1185">Reference proteome</keyword>
<keyword id="KW-0677">Repeat</keyword>
<evidence type="ECO:0000250" key="1"/>
<evidence type="ECO:0000256" key="2">
    <source>
        <dbReference type="SAM" id="MobiDB-lite"/>
    </source>
</evidence>
<protein>
    <recommendedName>
        <fullName>Ankyrin repeat domain-containing protein 13C-B</fullName>
    </recommendedName>
</protein>
<accession>Q7ZYD9</accession>
<comment type="function">
    <text evidence="1">Acts as a molecular chaperone for G protein-coupled receptors, regulating their biogenesis and exit from the ER.</text>
</comment>
<comment type="subcellular location">
    <subcellularLocation>
        <location evidence="1">Endoplasmic reticulum membrane</location>
    </subcellularLocation>
    <text evidence="1">Associated with the cytosolic side.</text>
</comment>
<name>A13CB_XENLA</name>
<reference key="1">
    <citation type="submission" date="2003-01" db="EMBL/GenBank/DDBJ databases">
        <authorList>
            <consortium name="NIH - Xenopus Gene Collection (XGC) project"/>
        </authorList>
    </citation>
    <scope>NUCLEOTIDE SEQUENCE [LARGE SCALE MRNA]</scope>
    <source>
        <tissue>Embryo</tissue>
    </source>
</reference>
<gene>
    <name type="primary">ankrd13c-b</name>
</gene>
<proteinExistence type="evidence at transcript level"/>
<dbReference type="EMBL" id="BC043828">
    <property type="protein sequence ID" value="AAH43828.1"/>
    <property type="molecule type" value="mRNA"/>
</dbReference>
<dbReference type="RefSeq" id="NP_001079491.1">
    <property type="nucleotide sequence ID" value="NM_001086022.1"/>
</dbReference>
<dbReference type="SMR" id="Q7ZYD9"/>
<dbReference type="DNASU" id="379178"/>
<dbReference type="GeneID" id="379178"/>
<dbReference type="KEGG" id="xla:379178"/>
<dbReference type="AGR" id="Xenbase:XB-GENE-6251619"/>
<dbReference type="CTD" id="379178"/>
<dbReference type="Xenbase" id="XB-GENE-6251619">
    <property type="gene designation" value="ankrd13c.S"/>
</dbReference>
<dbReference type="OrthoDB" id="1585644at2759"/>
<dbReference type="Proteomes" id="UP000186698">
    <property type="component" value="Chromosome 4S"/>
</dbReference>
<dbReference type="Bgee" id="379178">
    <property type="expression patterns" value="Expressed in egg cell and 19 other cell types or tissues"/>
</dbReference>
<dbReference type="GO" id="GO:0005737">
    <property type="term" value="C:cytoplasm"/>
    <property type="evidence" value="ECO:0000318"/>
    <property type="project" value="GO_Central"/>
</dbReference>
<dbReference type="GO" id="GO:0005789">
    <property type="term" value="C:endoplasmic reticulum membrane"/>
    <property type="evidence" value="ECO:0007669"/>
    <property type="project" value="UniProtKB-SubCell"/>
</dbReference>
<dbReference type="GO" id="GO:0005102">
    <property type="term" value="F:signaling receptor binding"/>
    <property type="evidence" value="ECO:0000318"/>
    <property type="project" value="GO_Central"/>
</dbReference>
<dbReference type="GO" id="GO:0006621">
    <property type="term" value="P:protein retention in ER lumen"/>
    <property type="evidence" value="ECO:0000318"/>
    <property type="project" value="GO_Central"/>
</dbReference>
<dbReference type="FunFam" id="1.25.40.20:FF:000073">
    <property type="entry name" value="Ankyrin repeat domain-containing protein 13C"/>
    <property type="match status" value="1"/>
</dbReference>
<dbReference type="Gene3D" id="1.25.40.20">
    <property type="entry name" value="Ankyrin repeat-containing domain"/>
    <property type="match status" value="1"/>
</dbReference>
<dbReference type="InterPro" id="IPR021832">
    <property type="entry name" value="ANKRD13"/>
</dbReference>
<dbReference type="InterPro" id="IPR055285">
    <property type="entry name" value="ANKRD13_C"/>
</dbReference>
<dbReference type="InterPro" id="IPR002110">
    <property type="entry name" value="Ankyrin_rpt"/>
</dbReference>
<dbReference type="InterPro" id="IPR036770">
    <property type="entry name" value="Ankyrin_rpt-contain_sf"/>
</dbReference>
<dbReference type="PANTHER" id="PTHR12447">
    <property type="entry name" value="ANKYRIN REPEAT DOMAIN-CONTAINING PROTEIN 13"/>
    <property type="match status" value="1"/>
</dbReference>
<dbReference type="PANTHER" id="PTHR12447:SF25">
    <property type="entry name" value="ANKYRIN REPEAT DOMAIN-CONTAINING PROTEIN 13C"/>
    <property type="match status" value="1"/>
</dbReference>
<dbReference type="Pfam" id="PF12796">
    <property type="entry name" value="Ank_2"/>
    <property type="match status" value="1"/>
</dbReference>
<dbReference type="Pfam" id="PF11904">
    <property type="entry name" value="ANKRD13_C"/>
    <property type="match status" value="1"/>
</dbReference>
<dbReference type="SMART" id="SM00248">
    <property type="entry name" value="ANK"/>
    <property type="match status" value="2"/>
</dbReference>
<dbReference type="SUPFAM" id="SSF48403">
    <property type="entry name" value="Ankyrin repeat"/>
    <property type="match status" value="1"/>
</dbReference>
<dbReference type="PROSITE" id="PS50297">
    <property type="entry name" value="ANK_REP_REGION"/>
    <property type="match status" value="1"/>
</dbReference>
<dbReference type="PROSITE" id="PS50088">
    <property type="entry name" value="ANK_REPEAT"/>
    <property type="match status" value="1"/>
</dbReference>
<feature type="chain" id="PRO_0000240649" description="Ankyrin repeat domain-containing protein 13C-B">
    <location>
        <begin position="1"/>
        <end position="513"/>
    </location>
</feature>
<feature type="repeat" description="ANK 1">
    <location>
        <begin position="83"/>
        <end position="114"/>
    </location>
</feature>
<feature type="repeat" description="ANK 2">
    <location>
        <begin position="115"/>
        <end position="144"/>
    </location>
</feature>
<feature type="repeat" description="ANK 3">
    <location>
        <begin position="148"/>
        <end position="177"/>
    </location>
</feature>
<feature type="region of interest" description="Disordered" evidence="2">
    <location>
        <begin position="1"/>
        <end position="34"/>
    </location>
</feature>
<feature type="region of interest" description="Disordered" evidence="2">
    <location>
        <begin position="55"/>
        <end position="77"/>
    </location>
</feature>
<feature type="compositionally biased region" description="Basic and acidic residues" evidence="2">
    <location>
        <begin position="1"/>
        <end position="19"/>
    </location>
</feature>
<feature type="compositionally biased region" description="Acidic residues" evidence="2">
    <location>
        <begin position="20"/>
        <end position="29"/>
    </location>
</feature>
<organism>
    <name type="scientific">Xenopus laevis</name>
    <name type="common">African clawed frog</name>
    <dbReference type="NCBI Taxonomy" id="8355"/>
    <lineage>
        <taxon>Eukaryota</taxon>
        <taxon>Metazoa</taxon>
        <taxon>Chordata</taxon>
        <taxon>Craniata</taxon>
        <taxon>Vertebrata</taxon>
        <taxon>Euteleostomi</taxon>
        <taxon>Amphibia</taxon>
        <taxon>Batrachia</taxon>
        <taxon>Anura</taxon>
        <taxon>Pipoidea</taxon>
        <taxon>Pipidae</taxon>
        <taxon>Xenopodinae</taxon>
        <taxon>Xenopus</taxon>
        <taxon>Xenopus</taxon>
    </lineage>
</organism>
<sequence>MTGEKIRSLHRDQKPSKDEDLLEPDEEATADGTFTRTSKLKSSKMFSNHKVIRSPSNPALLQNHHHHHQQQISPMTPGESKTDVYFPVHECVIKGDIRKLSSLIRSHNIGQKDNHGNTPLHLAVMLGNKECAHLLLAHNAPVKVKNAQGWSPLAEAISYGDRQMITALLRKLKQQSRESVEEKRPRLLKALKELGDFYLELHWDFQSWVPLLSRILPSDACKIYKQGINIRLDTTLIDFTDMKCQRGDLSFIFNGDAAPSESFVVLDNEQKVYQRIHHEESEMETEEEVDILMSSDIYSATLSTKSITFSRAQTGWLFREDKTERVGNFLADFYTVNGLILESRKRREHLTEEDILRNKAIMESLSKGGNLMEQTFEPVRRPSLTPPPPNTITWEEYISAENGKAPHLGRELVCKENKKTFKATIAMSQDFPLEIESLLNVLEVIAPFKHFNKLREFVQMKLPPGFPVKLDIPVFPTITATVTFQEFHYGEFEDAIFTIPDDYKEDPSRFPDL</sequence>